<dbReference type="EMBL" id="AF435571">
    <property type="protein sequence ID" value="AAM20906.1"/>
    <property type="molecule type" value="mRNA"/>
</dbReference>
<dbReference type="SMR" id="Q8MKF0"/>
<dbReference type="FunCoup" id="Q8MKF0">
    <property type="interactions" value="1604"/>
</dbReference>
<dbReference type="STRING" id="9913.ENSBTAP00000041252"/>
<dbReference type="InParanoid" id="Q8MKF0"/>
<dbReference type="OrthoDB" id="19944at2759"/>
<dbReference type="Proteomes" id="UP000009136">
    <property type="component" value="Unplaced"/>
</dbReference>
<dbReference type="GO" id="GO:0030424">
    <property type="term" value="C:axon"/>
    <property type="evidence" value="ECO:0007669"/>
    <property type="project" value="UniProtKB-SubCell"/>
</dbReference>
<dbReference type="GO" id="GO:0030864">
    <property type="term" value="C:cortical actin cytoskeleton"/>
    <property type="evidence" value="ECO:0000318"/>
    <property type="project" value="GO_Central"/>
</dbReference>
<dbReference type="GO" id="GO:0005737">
    <property type="term" value="C:cytoplasm"/>
    <property type="evidence" value="ECO:0000318"/>
    <property type="project" value="GO_Central"/>
</dbReference>
<dbReference type="GO" id="GO:0031901">
    <property type="term" value="C:early endosome membrane"/>
    <property type="evidence" value="ECO:0000250"/>
    <property type="project" value="UniProtKB"/>
</dbReference>
<dbReference type="GO" id="GO:0000137">
    <property type="term" value="C:Golgi cis cisterna"/>
    <property type="evidence" value="ECO:0000250"/>
    <property type="project" value="UniProtKB"/>
</dbReference>
<dbReference type="GO" id="GO:0000139">
    <property type="term" value="C:Golgi membrane"/>
    <property type="evidence" value="ECO:0007669"/>
    <property type="project" value="UniProtKB-SubCell"/>
</dbReference>
<dbReference type="GO" id="GO:0005886">
    <property type="term" value="C:plasma membrane"/>
    <property type="evidence" value="ECO:0000318"/>
    <property type="project" value="GO_Central"/>
</dbReference>
<dbReference type="GO" id="GO:0032588">
    <property type="term" value="C:trans-Golgi network membrane"/>
    <property type="evidence" value="ECO:0000250"/>
    <property type="project" value="UniProtKB"/>
</dbReference>
<dbReference type="GO" id="GO:0005096">
    <property type="term" value="F:GTPase activator activity"/>
    <property type="evidence" value="ECO:0000250"/>
    <property type="project" value="UniProtKB"/>
</dbReference>
<dbReference type="GO" id="GO:0045159">
    <property type="term" value="F:myosin II binding"/>
    <property type="evidence" value="ECO:0000318"/>
    <property type="project" value="GO_Central"/>
</dbReference>
<dbReference type="GO" id="GO:0007409">
    <property type="term" value="P:axonogenesis"/>
    <property type="evidence" value="ECO:0000250"/>
    <property type="project" value="UniProtKB"/>
</dbReference>
<dbReference type="GO" id="GO:0030866">
    <property type="term" value="P:cortical actin cytoskeleton organization"/>
    <property type="evidence" value="ECO:0000318"/>
    <property type="project" value="GO_Central"/>
</dbReference>
<dbReference type="GO" id="GO:0051294">
    <property type="term" value="P:establishment of spindle orientation"/>
    <property type="evidence" value="ECO:0000318"/>
    <property type="project" value="GO_Central"/>
</dbReference>
<dbReference type="GO" id="GO:0006887">
    <property type="term" value="P:exocytosis"/>
    <property type="evidence" value="ECO:0007669"/>
    <property type="project" value="UniProtKB-KW"/>
</dbReference>
<dbReference type="GO" id="GO:0006893">
    <property type="term" value="P:Golgi to plasma membrane transport"/>
    <property type="evidence" value="ECO:0000250"/>
    <property type="project" value="UniProtKB"/>
</dbReference>
<dbReference type="GO" id="GO:0032878">
    <property type="term" value="P:regulation of establishment or maintenance of cell polarity"/>
    <property type="evidence" value="ECO:0000318"/>
    <property type="project" value="GO_Central"/>
</dbReference>
<dbReference type="GO" id="GO:0008593">
    <property type="term" value="P:regulation of Notch signaling pathway"/>
    <property type="evidence" value="ECO:0000318"/>
    <property type="project" value="GO_Central"/>
</dbReference>
<dbReference type="FunFam" id="2.130.10.10:FF:001325">
    <property type="entry name" value="Lethal(2) giant larvae protein homolog 1"/>
    <property type="match status" value="1"/>
</dbReference>
<dbReference type="Gene3D" id="2.130.10.10">
    <property type="entry name" value="YVTN repeat-like/Quinoprotein amine dehydrogenase"/>
    <property type="match status" value="2"/>
</dbReference>
<dbReference type="InterPro" id="IPR000664">
    <property type="entry name" value="Lethal2_giant"/>
</dbReference>
<dbReference type="InterPro" id="IPR013577">
    <property type="entry name" value="LLGL2"/>
</dbReference>
<dbReference type="InterPro" id="IPR015943">
    <property type="entry name" value="WD40/YVTN_repeat-like_dom_sf"/>
</dbReference>
<dbReference type="InterPro" id="IPR036322">
    <property type="entry name" value="WD40_repeat_dom_sf"/>
</dbReference>
<dbReference type="InterPro" id="IPR001680">
    <property type="entry name" value="WD40_rpt"/>
</dbReference>
<dbReference type="PANTHER" id="PTHR10241">
    <property type="entry name" value="LETHAL 2 GIANT LARVAE PROTEIN"/>
    <property type="match status" value="1"/>
</dbReference>
<dbReference type="PANTHER" id="PTHR10241:SF21">
    <property type="entry name" value="LETHAL(2) GIANT LARVAE PROTEIN HOMOLOG 1"/>
    <property type="match status" value="1"/>
</dbReference>
<dbReference type="Pfam" id="PF08366">
    <property type="entry name" value="LLGL"/>
    <property type="match status" value="1"/>
</dbReference>
<dbReference type="PRINTS" id="PR00962">
    <property type="entry name" value="LETHAL2GIANT"/>
</dbReference>
<dbReference type="SMART" id="SM00320">
    <property type="entry name" value="WD40"/>
    <property type="match status" value="5"/>
</dbReference>
<dbReference type="SUPFAM" id="SSF50978">
    <property type="entry name" value="WD40 repeat-like"/>
    <property type="match status" value="1"/>
</dbReference>
<dbReference type="PROSITE" id="PS00678">
    <property type="entry name" value="WD_REPEATS_1"/>
    <property type="match status" value="2"/>
</dbReference>
<dbReference type="PROSITE" id="PS50082">
    <property type="entry name" value="WD_REPEATS_2"/>
    <property type="match status" value="1"/>
</dbReference>
<protein>
    <recommendedName>
        <fullName>Lethal(2) giant larvae protein homolog 1</fullName>
        <shortName>LLGL</shortName>
    </recommendedName>
    <alternativeName>
        <fullName>Bgl-1</fullName>
    </alternativeName>
    <alternativeName>
        <fullName>Giant larvae-1</fullName>
    </alternativeName>
</protein>
<proteinExistence type="evidence at transcript level"/>
<feature type="chain" id="PRO_0000232724" description="Lethal(2) giant larvae protein homolog 1">
    <location>
        <begin position="1"/>
        <end position="1036"/>
    </location>
</feature>
<feature type="repeat" description="WD 1">
    <location>
        <begin position="38"/>
        <end position="71"/>
    </location>
</feature>
<feature type="repeat" description="WD 2">
    <location>
        <begin position="78"/>
        <end position="119"/>
    </location>
</feature>
<feature type="repeat" description="WD 3">
    <location>
        <begin position="139"/>
        <end position="175"/>
    </location>
</feature>
<feature type="repeat" description="WD 4">
    <location>
        <begin position="199"/>
        <end position="233"/>
    </location>
</feature>
<feature type="repeat" description="WD 5">
    <location>
        <begin position="239"/>
        <end position="271"/>
    </location>
</feature>
<feature type="repeat" description="WD 6">
    <location>
        <begin position="289"/>
        <end position="331"/>
    </location>
</feature>
<feature type="repeat" description="WD 7">
    <location>
        <begin position="339"/>
        <end position="373"/>
    </location>
</feature>
<feature type="repeat" description="WD 8">
    <location>
        <begin position="395"/>
        <end position="473"/>
    </location>
</feature>
<feature type="repeat" description="WD 9">
    <location>
        <begin position="517"/>
        <end position="592"/>
    </location>
</feature>
<feature type="repeat" description="WD 10">
    <location>
        <begin position="601"/>
        <end position="662"/>
    </location>
</feature>
<feature type="repeat" description="WD 11">
    <location>
        <begin position="722"/>
        <end position="782"/>
    </location>
</feature>
<feature type="repeat" description="WD 12">
    <location>
        <begin position="791"/>
        <end position="843"/>
    </location>
</feature>
<feature type="repeat" description="WD 13">
    <location>
        <begin position="848"/>
        <end position="901"/>
    </location>
</feature>
<feature type="repeat" description="WD 14">
    <location>
        <begin position="915"/>
        <end position="938"/>
    </location>
</feature>
<feature type="region of interest" description="Disordered" evidence="4">
    <location>
        <begin position="667"/>
        <end position="688"/>
    </location>
</feature>
<feature type="region of interest" description="Disordered" evidence="4">
    <location>
        <begin position="980"/>
        <end position="1002"/>
    </location>
</feature>
<feature type="compositionally biased region" description="Basic residues" evidence="4">
    <location>
        <begin position="667"/>
        <end position="677"/>
    </location>
</feature>
<feature type="compositionally biased region" description="Polar residues" evidence="4">
    <location>
        <begin position="679"/>
        <end position="688"/>
    </location>
</feature>
<feature type="modified residue" description="Phosphoserine" evidence="2">
    <location>
        <position position="662"/>
    </location>
</feature>
<feature type="modified residue" description="Phosphothreonine" evidence="3">
    <location>
        <position position="957"/>
    </location>
</feature>
<feature type="modified residue" description="Phosphoserine" evidence="3">
    <location>
        <position position="964"/>
    </location>
</feature>
<feature type="modified residue" description="Phosphoserine" evidence="3">
    <location>
        <position position="982"/>
    </location>
</feature>
<feature type="modified residue" description="Phosphoserine" evidence="3">
    <location>
        <position position="989"/>
    </location>
</feature>
<keyword id="KW-0966">Cell projection</keyword>
<keyword id="KW-0963">Cytoplasm</keyword>
<keyword id="KW-0206">Cytoskeleton</keyword>
<keyword id="KW-0967">Endosome</keyword>
<keyword id="KW-0268">Exocytosis</keyword>
<keyword id="KW-0333">Golgi apparatus</keyword>
<keyword id="KW-0472">Membrane</keyword>
<keyword id="KW-0597">Phosphoprotein</keyword>
<keyword id="KW-1185">Reference proteome</keyword>
<keyword id="KW-0677">Repeat</keyword>
<keyword id="KW-0853">WD repeat</keyword>
<organism>
    <name type="scientific">Bos taurus</name>
    <name type="common">Bovine</name>
    <dbReference type="NCBI Taxonomy" id="9913"/>
    <lineage>
        <taxon>Eukaryota</taxon>
        <taxon>Metazoa</taxon>
        <taxon>Chordata</taxon>
        <taxon>Craniata</taxon>
        <taxon>Vertebrata</taxon>
        <taxon>Euteleostomi</taxon>
        <taxon>Mammalia</taxon>
        <taxon>Eutheria</taxon>
        <taxon>Laurasiatheria</taxon>
        <taxon>Artiodactyla</taxon>
        <taxon>Ruminantia</taxon>
        <taxon>Pecora</taxon>
        <taxon>Bovidae</taxon>
        <taxon>Bovinae</taxon>
        <taxon>Bos</taxon>
    </lineage>
</organism>
<evidence type="ECO:0000250" key="1"/>
<evidence type="ECO:0000250" key="2">
    <source>
        <dbReference type="UniProtKB" id="Q15334"/>
    </source>
</evidence>
<evidence type="ECO:0000250" key="3">
    <source>
        <dbReference type="UniProtKB" id="Q80Y17"/>
    </source>
</evidence>
<evidence type="ECO:0000256" key="4">
    <source>
        <dbReference type="SAM" id="MobiDB-lite"/>
    </source>
</evidence>
<evidence type="ECO:0000269" key="5">
    <source>
    </source>
</evidence>
<evidence type="ECO:0000305" key="6"/>
<accession>Q8MKF0</accession>
<sequence length="1036" mass="112663">MMKFRFRRQGADPQREKLKQELFAFHKTVEHGFPNQPSALAFDPELRIMAIGTRSGAVKIYGAPGVEFTGLHRDAATVTQMHFLPGQGRLLTLLDDSSLHLWEIIQRNGCAHLEEGLSFHPPSRPSFDNASFPAGLTRVTVVLLAAGDTVVLGTESGSIFFLDVATLALLEGQTLSPDEVLRSVPDDYRCGKALGPVESLQGHLQDPSKILIGYSRGLLVIWSQATQSVEHVFLGNQQLESLCWGRGGSNIISSHSDGSYAIWSTDTGSPPTLQPTVVTTPYGPFPCKAINKILWRSCESGDHFIIFSGGMPRASYGDRHCVCVLRAETLVTLDFTSRVIDFFTVHSTQPEDECDNPQALAVLLEEELVVLDLQTPGWPAVPAPYLAPLHSSAITCSAHVANVPSKLWARIVSAGEQQSPQPASSALSWPITGGRNLAQEPSQRGLLLTGHEDGTVRFWDASGVALRPLYKLSTAGLFQTDCEHADSLAQAVEDDWPPFRKVGCFDPYSDDPRLGIQKVALCKYTAQMVVAGTAGQVLVLELSEVPAEHAVSVANVDLLQDREGFTWKGHERLNPHTGLLPWPAGFQPRMLIQCLPPAAVTAVTLHAEWSLVAFGTSHGFGLFDYQRKSPVLARCTLHPNDSLAMEGPLSRVKSLKKSLRQSFRRIRKSRVSGKKRTPAASSKLQEANAQLAEQTCPHDLEMTPVQRRIEPRSADDSLSGVVRCLYFADTFLRDATHHGPTMWAGTNSGSVFAYALEVPAATAGGEKRPEQAVEAVLGKEVQLMHRAPVVAIAVLDGRGRPLPEPYEASRDLAQAPDMQGGHAVLIASEEQFKVFTLPKVSAKTKFKLTAHEGCRVRKVALATFASVMSEDYAETCLACLTNLGDVHVFAVPGLRPQVHYSCIRKEDISGIASCVFTRHGQGFYLISPSEFERFSLSARNITEPLCSLDISWPQNATQPRLQESPKLSQANGTRDIILAPESCEGSPSSAHSKRADTMEPPEAALSPVSIDSAASGDTMLDTTGDVTVEYVKDFLG</sequence>
<comment type="function">
    <text evidence="1">Cortical cytoskeleton protein found in a complex involved in maintaining cell polarity and epithelial integrity. Involved in the regulation of mitotic spindle orientation, proliferation, differentiation and tissue organization of neuroepithelial cells. Involved in axonogenesis through RAB10 activation thereby regulating vesicular membrane trafficking toward the axonal plasma membrane (By similarity).</text>
</comment>
<comment type="subunit">
    <text evidence="1">Associated with nonmuscle myosin II heavy chain. Interacts with PRKCI/aPKC, PARD6B/Par-6 and PARD6A. Interacts with STX4A. Interacts with RAB10 (GDP-bound form); the interaction is direct and promotes RAB10 association with membranes and activation through competition with the Rab inhibitor GDI1. Interacts with DCAF1 (By similarity).</text>
</comment>
<comment type="subcellular location">
    <subcellularLocation>
        <location evidence="1">Early endosome membrane</location>
    </subcellularLocation>
    <subcellularLocation>
        <location evidence="1">Golgi apparatus</location>
        <location evidence="1">trans-Golgi network membrane</location>
    </subcellularLocation>
    <subcellularLocation>
        <location evidence="1">Cell projection</location>
        <location evidence="1">Axon</location>
    </subcellularLocation>
    <subcellularLocation>
        <location evidence="1">Golgi apparatus membrane</location>
    </subcellularLocation>
    <subcellularLocation>
        <location evidence="1">Cytoplasm</location>
        <location evidence="1">Cytoskeleton</location>
    </subcellularLocation>
    <text evidence="1">Localized to the lateral membrane during the polarization and formation cell-cell contacts. Enriched in developing axons (By similarity).</text>
</comment>
<comment type="tissue specificity">
    <text evidence="5">Widely expressed. Expressed in brain, ovary, testis, with moderate expression in lever, uterus, lung and kidney.</text>
</comment>
<comment type="PTM">
    <text>Phosphorylated by PRKCI.</text>
</comment>
<comment type="miscellaneous">
    <text>Complements a salt-sensitive yeast mutant (SOP-deleted mutant) and thus can regulate cation homeostasis.</text>
</comment>
<comment type="similarity">
    <text evidence="6">Belongs to the WD repeat L(2)GL family.</text>
</comment>
<reference key="1">
    <citation type="journal article" date="2002" name="Int. J. Oncol.">
        <title>Molecular cloning and characterization of bovine bgl-1, a novel family member of WD-40 repeat-containing lethal giant larvae tumor suppressor genes.</title>
        <authorList>
            <person name="Baek K.-H."/>
            <person name="Kim Y.-S."/>
            <person name="Jung S."/>
            <person name="Lee K.Y."/>
            <person name="Choi H.-K."/>
            <person name="Kim K.-S."/>
        </authorList>
    </citation>
    <scope>NUCLEOTIDE SEQUENCE [MRNA]</scope>
    <scope>TISSUE SPECIFICITY</scope>
    <source>
        <tissue>Brain</tissue>
    </source>
</reference>
<name>L2GL1_BOVIN</name>
<gene>
    <name type="primary">LLGL1</name>
    <name type="synonym">BGL1</name>
</gene>